<comment type="function">
    <text evidence="1">Component of the ERMES/MDM complex, which serves as a molecular tether to connect the endoplasmic reticulum (ER) and mitochondria. Components of this complex are involved in the control of mitochondrial shape and protein biogenesis, and function in nonvesicular lipid trafficking between the ER and mitochondria. MDM34 is required for the interaction of the ER-resident membrane protein MMM1 and the outer mitochondrial membrane-resident beta-barrel protein MDM10.</text>
</comment>
<comment type="subunit">
    <text evidence="1">Component of the ER-mitochondria encounter structure (ERMES) or MDM complex, composed of MMM1, MDM10, MDM12 and MDM34.</text>
</comment>
<comment type="subcellular location">
    <subcellularLocation>
        <location evidence="1">Mitochondrion outer membrane</location>
        <topology evidence="1">Multi-pass membrane protein</topology>
    </subcellularLocation>
    <text evidence="1">The ERMES/MDM complex localizes to a few discrete foci (around 10 per single cell), that represent mitochondria-endoplasmic reticulum junctions. These foci are often found next to mtDNA nucleoids.</text>
</comment>
<comment type="domain">
    <text evidence="1">Lacks alpha-helical transmembrane segments, suggesting that it resides in the membrane via beta-sheet conformations similar to those predicted for other outer membrane proteins and porin.</text>
</comment>
<comment type="domain">
    <text evidence="1">The SMP-LTD domain is a barrel-like domain that can bind various types of glycerophospholipids in its interior and mediate their transfer between two adjacent bilayers.</text>
</comment>
<comment type="similarity">
    <text evidence="1">Belongs to the MDM34 family.</text>
</comment>
<gene>
    <name evidence="1" type="primary">MDM34</name>
    <name type="ORF">LACBIDRAFT_245888</name>
</gene>
<accession>B0CXH5</accession>
<proteinExistence type="inferred from homology"/>
<dbReference type="EMBL" id="DS547094">
    <property type="protein sequence ID" value="EDR12723.1"/>
    <property type="molecule type" value="Genomic_DNA"/>
</dbReference>
<dbReference type="RefSeq" id="XP_001876987.1">
    <property type="nucleotide sequence ID" value="XM_001876952.1"/>
</dbReference>
<dbReference type="SMR" id="B0CXH5"/>
<dbReference type="FunCoup" id="B0CXH5">
    <property type="interactions" value="36"/>
</dbReference>
<dbReference type="STRING" id="486041.B0CXH5"/>
<dbReference type="GeneID" id="6072040"/>
<dbReference type="KEGG" id="lbc:LACBIDRAFT_245888"/>
<dbReference type="HOGENOM" id="CLU_036502_0_0_1"/>
<dbReference type="InParanoid" id="B0CXH5"/>
<dbReference type="OrthoDB" id="17927at2759"/>
<dbReference type="Proteomes" id="UP000001194">
    <property type="component" value="Unassembled WGS sequence"/>
</dbReference>
<dbReference type="GO" id="GO:0032865">
    <property type="term" value="C:ERMES complex"/>
    <property type="evidence" value="ECO:0007669"/>
    <property type="project" value="UniProtKB-UniRule"/>
</dbReference>
<dbReference type="GO" id="GO:0008289">
    <property type="term" value="F:lipid binding"/>
    <property type="evidence" value="ECO:0007669"/>
    <property type="project" value="UniProtKB-KW"/>
</dbReference>
<dbReference type="GO" id="GO:0000002">
    <property type="term" value="P:mitochondrial genome maintenance"/>
    <property type="evidence" value="ECO:0007669"/>
    <property type="project" value="UniProtKB-UniRule"/>
</dbReference>
<dbReference type="GO" id="GO:1990456">
    <property type="term" value="P:mitochondrion-endoplasmic reticulum membrane tethering"/>
    <property type="evidence" value="ECO:0007669"/>
    <property type="project" value="TreeGrafter"/>
</dbReference>
<dbReference type="GO" id="GO:0015914">
    <property type="term" value="P:phospholipid transport"/>
    <property type="evidence" value="ECO:0007669"/>
    <property type="project" value="TreeGrafter"/>
</dbReference>
<dbReference type="CDD" id="cd21673">
    <property type="entry name" value="SMP_Mdm34"/>
    <property type="match status" value="1"/>
</dbReference>
<dbReference type="HAMAP" id="MF_03105">
    <property type="entry name" value="Mdm34"/>
    <property type="match status" value="1"/>
</dbReference>
<dbReference type="InterPro" id="IPR027536">
    <property type="entry name" value="Mdm34"/>
</dbReference>
<dbReference type="InterPro" id="IPR031468">
    <property type="entry name" value="SMP_LBD"/>
</dbReference>
<dbReference type="PANTHER" id="PTHR28185">
    <property type="entry name" value="MITOCHONDRIAL DISTRIBUTION AND MORPHOLOGY PROTEIN 34"/>
    <property type="match status" value="1"/>
</dbReference>
<dbReference type="PANTHER" id="PTHR28185:SF1">
    <property type="entry name" value="MITOCHONDRIAL DISTRIBUTION AND MORPHOLOGY PROTEIN 34"/>
    <property type="match status" value="1"/>
</dbReference>
<dbReference type="PROSITE" id="PS51847">
    <property type="entry name" value="SMP"/>
    <property type="match status" value="1"/>
</dbReference>
<name>MDM34_LACBS</name>
<keyword id="KW-0445">Lipid transport</keyword>
<keyword id="KW-0446">Lipid-binding</keyword>
<keyword id="KW-0472">Membrane</keyword>
<keyword id="KW-0496">Mitochondrion</keyword>
<keyword id="KW-1000">Mitochondrion outer membrane</keyword>
<keyword id="KW-1185">Reference proteome</keyword>
<keyword id="KW-0812">Transmembrane</keyword>
<keyword id="KW-1134">Transmembrane beta strand</keyword>
<keyword id="KW-0813">Transport</keyword>
<protein>
    <recommendedName>
        <fullName evidence="1">Mitochondrial distribution and morphology protein 34</fullName>
    </recommendedName>
</protein>
<feature type="chain" id="PRO_0000384344" description="Mitochondrial distribution and morphology protein 34">
    <location>
        <begin position="1"/>
        <end position="376"/>
    </location>
</feature>
<feature type="domain" description="SMP-LTD" evidence="1">
    <location>
        <begin position="1"/>
        <end position="194"/>
    </location>
</feature>
<feature type="region of interest" description="Disordered" evidence="2">
    <location>
        <begin position="207"/>
        <end position="249"/>
    </location>
</feature>
<feature type="region of interest" description="Disordered" evidence="2">
    <location>
        <begin position="286"/>
        <end position="376"/>
    </location>
</feature>
<feature type="compositionally biased region" description="Acidic residues" evidence="2">
    <location>
        <begin position="218"/>
        <end position="230"/>
    </location>
</feature>
<feature type="compositionally biased region" description="Basic residues" evidence="2">
    <location>
        <begin position="306"/>
        <end position="318"/>
    </location>
</feature>
<feature type="compositionally biased region" description="Basic and acidic residues" evidence="2">
    <location>
        <begin position="350"/>
        <end position="362"/>
    </location>
</feature>
<evidence type="ECO:0000255" key="1">
    <source>
        <dbReference type="HAMAP-Rule" id="MF_03105"/>
    </source>
</evidence>
<evidence type="ECO:0000256" key="2">
    <source>
        <dbReference type="SAM" id="MobiDB-lite"/>
    </source>
</evidence>
<organism>
    <name type="scientific">Laccaria bicolor (strain S238N-H82 / ATCC MYA-4686)</name>
    <name type="common">Bicoloured deceiver</name>
    <name type="synonym">Laccaria laccata var. bicolor</name>
    <dbReference type="NCBI Taxonomy" id="486041"/>
    <lineage>
        <taxon>Eukaryota</taxon>
        <taxon>Fungi</taxon>
        <taxon>Dikarya</taxon>
        <taxon>Basidiomycota</taxon>
        <taxon>Agaricomycotina</taxon>
        <taxon>Agaricomycetes</taxon>
        <taxon>Agaricomycetidae</taxon>
        <taxon>Agaricales</taxon>
        <taxon>Agaricineae</taxon>
        <taxon>Hydnangiaceae</taxon>
        <taxon>Laccaria</taxon>
    </lineage>
</organism>
<reference key="1">
    <citation type="journal article" date="2008" name="Nature">
        <title>The genome of Laccaria bicolor provides insights into mycorrhizal symbiosis.</title>
        <authorList>
            <person name="Martin F."/>
            <person name="Aerts A."/>
            <person name="Ahren D."/>
            <person name="Brun A."/>
            <person name="Danchin E.G.J."/>
            <person name="Duchaussoy F."/>
            <person name="Gibon J."/>
            <person name="Kohler A."/>
            <person name="Lindquist E."/>
            <person name="Pereda V."/>
            <person name="Salamov A."/>
            <person name="Shapiro H.J."/>
            <person name="Wuyts J."/>
            <person name="Blaudez D."/>
            <person name="Buee M."/>
            <person name="Brokstein P."/>
            <person name="Canbaeck B."/>
            <person name="Cohen D."/>
            <person name="Courty P.E."/>
            <person name="Coutinho P.M."/>
            <person name="Delaruelle C."/>
            <person name="Detter J.C."/>
            <person name="Deveau A."/>
            <person name="DiFazio S."/>
            <person name="Duplessis S."/>
            <person name="Fraissinet-Tachet L."/>
            <person name="Lucic E."/>
            <person name="Frey-Klett P."/>
            <person name="Fourrey C."/>
            <person name="Feussner I."/>
            <person name="Gay G."/>
            <person name="Grimwood J."/>
            <person name="Hoegger P.J."/>
            <person name="Jain P."/>
            <person name="Kilaru S."/>
            <person name="Labbe J."/>
            <person name="Lin Y.C."/>
            <person name="Legue V."/>
            <person name="Le Tacon F."/>
            <person name="Marmeisse R."/>
            <person name="Melayah D."/>
            <person name="Montanini B."/>
            <person name="Muratet M."/>
            <person name="Nehls U."/>
            <person name="Niculita-Hirzel H."/>
            <person name="Oudot-Le Secq M.P."/>
            <person name="Peter M."/>
            <person name="Quesneville H."/>
            <person name="Rajashekar B."/>
            <person name="Reich M."/>
            <person name="Rouhier N."/>
            <person name="Schmutz J."/>
            <person name="Yin T."/>
            <person name="Chalot M."/>
            <person name="Henrissat B."/>
            <person name="Kuees U."/>
            <person name="Lucas S."/>
            <person name="Van de Peer Y."/>
            <person name="Podila G.K."/>
            <person name="Polle A."/>
            <person name="Pukkila P.J."/>
            <person name="Richardson P.M."/>
            <person name="Rouze P."/>
            <person name="Sanders I.R."/>
            <person name="Stajich J.E."/>
            <person name="Tunlid A."/>
            <person name="Tuskan G."/>
            <person name="Grigoriev I.V."/>
        </authorList>
    </citation>
    <scope>NUCLEOTIDE SEQUENCE [LARGE SCALE GENOMIC DNA]</scope>
    <source>
        <strain>S238N-H82 / ATCC MYA-4686</strain>
    </source>
</reference>
<sequence>MSFTFNWPRFSDQFHYDAMQMLNTALNKGNKPPIIADKIEVVELEMGTQPPELEIRDIGDLTVDQFRGIFRLTYAGDAHLVLKTKVQANPLNHKQPDIHLMVGSGGMLAAKQPLVVPMLLRLSHFRLSSYVVLVVSKQKGITLVFKTDPLQNVDINSTFDSIAVIQKFIQREIEGQLRQMFREDLPGIIHRLSQQWVKAKVEAPYLSKHPPPPIPPEEISEPGDYGEEGEFPFGSPPNHHSLDPDPKIVLRPSLNNASIHQLSTLSHSNHTLSPYTRSLSHFTVRSVPPRGIGPSGLSASFERQPVKAKRKRTYRLGGRKPPPESVPAVPDSPERASSPIPPSEFDESDMDRYFRSYDDHSRPPNIRQYRSHLHPS</sequence>